<reference key="1">
    <citation type="submission" date="2007-09" db="EMBL/GenBank/DDBJ databases">
        <title>Complete sequence of chromosome of Serratia proteamaculans 568.</title>
        <authorList>
            <consortium name="US DOE Joint Genome Institute"/>
            <person name="Copeland A."/>
            <person name="Lucas S."/>
            <person name="Lapidus A."/>
            <person name="Barry K."/>
            <person name="Glavina del Rio T."/>
            <person name="Dalin E."/>
            <person name="Tice H."/>
            <person name="Pitluck S."/>
            <person name="Chain P."/>
            <person name="Malfatti S."/>
            <person name="Shin M."/>
            <person name="Vergez L."/>
            <person name="Schmutz J."/>
            <person name="Larimer F."/>
            <person name="Land M."/>
            <person name="Hauser L."/>
            <person name="Kyrpides N."/>
            <person name="Kim E."/>
            <person name="Taghavi S."/>
            <person name="Newman L."/>
            <person name="Vangronsveld J."/>
            <person name="van der Lelie D."/>
            <person name="Richardson P."/>
        </authorList>
    </citation>
    <scope>NUCLEOTIDE SEQUENCE [LARGE SCALE GENOMIC DNA]</scope>
    <source>
        <strain>568</strain>
    </source>
</reference>
<name>GCH1_SERP5</name>
<gene>
    <name evidence="2" type="primary">folE</name>
    <name type="ordered locus">Spro_1560</name>
</gene>
<organism>
    <name type="scientific">Serratia proteamaculans (strain 568)</name>
    <dbReference type="NCBI Taxonomy" id="399741"/>
    <lineage>
        <taxon>Bacteria</taxon>
        <taxon>Pseudomonadati</taxon>
        <taxon>Pseudomonadota</taxon>
        <taxon>Gammaproteobacteria</taxon>
        <taxon>Enterobacterales</taxon>
        <taxon>Yersiniaceae</taxon>
        <taxon>Serratia</taxon>
    </lineage>
</organism>
<proteinExistence type="inferred from homology"/>
<keyword id="KW-0342">GTP-binding</keyword>
<keyword id="KW-0378">Hydrolase</keyword>
<keyword id="KW-0479">Metal-binding</keyword>
<keyword id="KW-0547">Nucleotide-binding</keyword>
<keyword id="KW-0554">One-carbon metabolism</keyword>
<keyword id="KW-0862">Zinc</keyword>
<comment type="catalytic activity">
    <reaction evidence="2">
        <text>GTP + H2O = 7,8-dihydroneopterin 3'-triphosphate + formate + H(+)</text>
        <dbReference type="Rhea" id="RHEA:17473"/>
        <dbReference type="ChEBI" id="CHEBI:15377"/>
        <dbReference type="ChEBI" id="CHEBI:15378"/>
        <dbReference type="ChEBI" id="CHEBI:15740"/>
        <dbReference type="ChEBI" id="CHEBI:37565"/>
        <dbReference type="ChEBI" id="CHEBI:58462"/>
        <dbReference type="EC" id="3.5.4.16"/>
    </reaction>
</comment>
<comment type="pathway">
    <text evidence="2">Cofactor biosynthesis; 7,8-dihydroneopterin triphosphate biosynthesis; 7,8-dihydroneopterin triphosphate from GTP: step 1/1.</text>
</comment>
<comment type="subunit">
    <text evidence="1">Toroid-shaped homodecamer, composed of two pentamers of five dimers.</text>
</comment>
<comment type="similarity">
    <text evidence="2">Belongs to the GTP cyclohydrolase I family.</text>
</comment>
<evidence type="ECO:0000250" key="1"/>
<evidence type="ECO:0000255" key="2">
    <source>
        <dbReference type="HAMAP-Rule" id="MF_00223"/>
    </source>
</evidence>
<accession>A8GC24</accession>
<feature type="chain" id="PRO_1000058677" description="GTP cyclohydrolase 1">
    <location>
        <begin position="1"/>
        <end position="221"/>
    </location>
</feature>
<feature type="binding site" evidence="2">
    <location>
        <position position="109"/>
    </location>
    <ligand>
        <name>Zn(2+)</name>
        <dbReference type="ChEBI" id="CHEBI:29105"/>
    </ligand>
</feature>
<feature type="binding site" evidence="2">
    <location>
        <position position="112"/>
    </location>
    <ligand>
        <name>Zn(2+)</name>
        <dbReference type="ChEBI" id="CHEBI:29105"/>
    </ligand>
</feature>
<feature type="binding site" evidence="2">
    <location>
        <position position="180"/>
    </location>
    <ligand>
        <name>Zn(2+)</name>
        <dbReference type="ChEBI" id="CHEBI:29105"/>
    </ligand>
</feature>
<dbReference type="EC" id="3.5.4.16" evidence="2"/>
<dbReference type="EMBL" id="CP000826">
    <property type="protein sequence ID" value="ABV40664.1"/>
    <property type="molecule type" value="Genomic_DNA"/>
</dbReference>
<dbReference type="SMR" id="A8GC24"/>
<dbReference type="STRING" id="399741.Spro_1560"/>
<dbReference type="KEGG" id="spe:Spro_1560"/>
<dbReference type="eggNOG" id="COG0302">
    <property type="taxonomic scope" value="Bacteria"/>
</dbReference>
<dbReference type="HOGENOM" id="CLU_049768_3_2_6"/>
<dbReference type="OrthoDB" id="9801207at2"/>
<dbReference type="UniPathway" id="UPA00848">
    <property type="reaction ID" value="UER00151"/>
</dbReference>
<dbReference type="GO" id="GO:0005737">
    <property type="term" value="C:cytoplasm"/>
    <property type="evidence" value="ECO:0007669"/>
    <property type="project" value="TreeGrafter"/>
</dbReference>
<dbReference type="GO" id="GO:0005525">
    <property type="term" value="F:GTP binding"/>
    <property type="evidence" value="ECO:0007669"/>
    <property type="project" value="UniProtKB-KW"/>
</dbReference>
<dbReference type="GO" id="GO:0003934">
    <property type="term" value="F:GTP cyclohydrolase I activity"/>
    <property type="evidence" value="ECO:0007669"/>
    <property type="project" value="UniProtKB-UniRule"/>
</dbReference>
<dbReference type="GO" id="GO:0008270">
    <property type="term" value="F:zinc ion binding"/>
    <property type="evidence" value="ECO:0007669"/>
    <property type="project" value="UniProtKB-UniRule"/>
</dbReference>
<dbReference type="GO" id="GO:0006730">
    <property type="term" value="P:one-carbon metabolic process"/>
    <property type="evidence" value="ECO:0007669"/>
    <property type="project" value="UniProtKB-UniRule"/>
</dbReference>
<dbReference type="GO" id="GO:0006729">
    <property type="term" value="P:tetrahydrobiopterin biosynthetic process"/>
    <property type="evidence" value="ECO:0007669"/>
    <property type="project" value="TreeGrafter"/>
</dbReference>
<dbReference type="GO" id="GO:0046654">
    <property type="term" value="P:tetrahydrofolate biosynthetic process"/>
    <property type="evidence" value="ECO:0007669"/>
    <property type="project" value="UniProtKB-UniRule"/>
</dbReference>
<dbReference type="FunFam" id="1.10.286.10:FF:000002">
    <property type="entry name" value="GTP cyclohydrolase 1"/>
    <property type="match status" value="1"/>
</dbReference>
<dbReference type="FunFam" id="3.30.1130.10:FF:000001">
    <property type="entry name" value="GTP cyclohydrolase 1"/>
    <property type="match status" value="1"/>
</dbReference>
<dbReference type="Gene3D" id="1.10.286.10">
    <property type="match status" value="1"/>
</dbReference>
<dbReference type="Gene3D" id="3.30.1130.10">
    <property type="match status" value="1"/>
</dbReference>
<dbReference type="HAMAP" id="MF_00223">
    <property type="entry name" value="FolE"/>
    <property type="match status" value="1"/>
</dbReference>
<dbReference type="InterPro" id="IPR043133">
    <property type="entry name" value="GTP-CH-I_C/QueF"/>
</dbReference>
<dbReference type="InterPro" id="IPR043134">
    <property type="entry name" value="GTP-CH-I_N"/>
</dbReference>
<dbReference type="InterPro" id="IPR001474">
    <property type="entry name" value="GTP_CycHdrlase_I"/>
</dbReference>
<dbReference type="InterPro" id="IPR018234">
    <property type="entry name" value="GTP_CycHdrlase_I_CS"/>
</dbReference>
<dbReference type="InterPro" id="IPR020602">
    <property type="entry name" value="GTP_CycHdrlase_I_dom"/>
</dbReference>
<dbReference type="NCBIfam" id="TIGR00063">
    <property type="entry name" value="folE"/>
    <property type="match status" value="1"/>
</dbReference>
<dbReference type="NCBIfam" id="NF006824">
    <property type="entry name" value="PRK09347.1-1"/>
    <property type="match status" value="1"/>
</dbReference>
<dbReference type="NCBIfam" id="NF006826">
    <property type="entry name" value="PRK09347.1-3"/>
    <property type="match status" value="1"/>
</dbReference>
<dbReference type="PANTHER" id="PTHR11109:SF7">
    <property type="entry name" value="GTP CYCLOHYDROLASE 1"/>
    <property type="match status" value="1"/>
</dbReference>
<dbReference type="PANTHER" id="PTHR11109">
    <property type="entry name" value="GTP CYCLOHYDROLASE I"/>
    <property type="match status" value="1"/>
</dbReference>
<dbReference type="Pfam" id="PF01227">
    <property type="entry name" value="GTP_cyclohydroI"/>
    <property type="match status" value="1"/>
</dbReference>
<dbReference type="SUPFAM" id="SSF55620">
    <property type="entry name" value="Tetrahydrobiopterin biosynthesis enzymes-like"/>
    <property type="match status" value="1"/>
</dbReference>
<dbReference type="PROSITE" id="PS00859">
    <property type="entry name" value="GTP_CYCLOHYDROL_1_1"/>
    <property type="match status" value="1"/>
</dbReference>
<dbReference type="PROSITE" id="PS00860">
    <property type="entry name" value="GTP_CYCLOHYDROL_1_2"/>
    <property type="match status" value="1"/>
</dbReference>
<sequence length="221" mass="24874">MTSLSKEAVLVHAALEERGLETPLRGEVLDRETRKRRIKEHMTEIMQLLNLDLSDDSLAETPHRIAKMYVDEIFSGLDYANFPKITVIENKMKVDEMVTVRDITLTSTCEHHFVTIDGKATVAYIPKDAVIGLSKINRIVQFFSQRPQVQERLTQQILVALQTLLGTNNVAVSIDAVHYCVKARGIRDATSATTTTSLGGLFKSSQNTRQEFLRAVRHHQG</sequence>
<protein>
    <recommendedName>
        <fullName evidence="2">GTP cyclohydrolase 1</fullName>
        <ecNumber evidence="2">3.5.4.16</ecNumber>
    </recommendedName>
    <alternativeName>
        <fullName evidence="2">GTP cyclohydrolase I</fullName>
        <shortName evidence="2">GTP-CH-I</shortName>
    </alternativeName>
</protein>